<organism>
    <name type="scientific">Streptococcus pneumoniae (strain P1031)</name>
    <dbReference type="NCBI Taxonomy" id="488223"/>
    <lineage>
        <taxon>Bacteria</taxon>
        <taxon>Bacillati</taxon>
        <taxon>Bacillota</taxon>
        <taxon>Bacilli</taxon>
        <taxon>Lactobacillales</taxon>
        <taxon>Streptococcaceae</taxon>
        <taxon>Streptococcus</taxon>
    </lineage>
</organism>
<feature type="chain" id="PRO_1000148076" description="Septation ring formation regulator EzrA">
    <location>
        <begin position="1"/>
        <end position="575"/>
    </location>
</feature>
<feature type="topological domain" description="Extracellular" evidence="1">
    <location>
        <begin position="1"/>
        <end position="8"/>
    </location>
</feature>
<feature type="transmembrane region" description="Helical" evidence="1">
    <location>
        <begin position="9"/>
        <end position="27"/>
    </location>
</feature>
<feature type="topological domain" description="Cytoplasmic" evidence="1">
    <location>
        <begin position="28"/>
        <end position="575"/>
    </location>
</feature>
<feature type="coiled-coil region" evidence="1">
    <location>
        <begin position="105"/>
        <end position="191"/>
    </location>
</feature>
<feature type="coiled-coil region" evidence="1">
    <location>
        <begin position="265"/>
        <end position="301"/>
    </location>
</feature>
<feature type="coiled-coil region" evidence="1">
    <location>
        <begin position="354"/>
        <end position="416"/>
    </location>
</feature>
<feature type="coiled-coil region" evidence="1">
    <location>
        <begin position="456"/>
        <end position="526"/>
    </location>
</feature>
<name>EZRA_STRZP</name>
<keyword id="KW-0131">Cell cycle</keyword>
<keyword id="KW-0132">Cell division</keyword>
<keyword id="KW-1003">Cell membrane</keyword>
<keyword id="KW-0175">Coiled coil</keyword>
<keyword id="KW-0472">Membrane</keyword>
<keyword id="KW-0717">Septation</keyword>
<keyword id="KW-0812">Transmembrane</keyword>
<keyword id="KW-1133">Transmembrane helix</keyword>
<proteinExistence type="inferred from homology"/>
<protein>
    <recommendedName>
        <fullName evidence="1">Septation ring formation regulator EzrA</fullName>
    </recommendedName>
</protein>
<reference key="1">
    <citation type="journal article" date="2010" name="Genome Biol.">
        <title>Structure and dynamics of the pan-genome of Streptococcus pneumoniae and closely related species.</title>
        <authorList>
            <person name="Donati C."/>
            <person name="Hiller N.L."/>
            <person name="Tettelin H."/>
            <person name="Muzzi A."/>
            <person name="Croucher N.J."/>
            <person name="Angiuoli S.V."/>
            <person name="Oggioni M."/>
            <person name="Dunning Hotopp J.C."/>
            <person name="Hu F.Z."/>
            <person name="Riley D.R."/>
            <person name="Covacci A."/>
            <person name="Mitchell T.J."/>
            <person name="Bentley S.D."/>
            <person name="Kilian M."/>
            <person name="Ehrlich G.D."/>
            <person name="Rappuoli R."/>
            <person name="Moxon E.R."/>
            <person name="Masignani V."/>
        </authorList>
    </citation>
    <scope>NUCLEOTIDE SEQUENCE [LARGE SCALE GENOMIC DNA]</scope>
    <source>
        <strain>P1031</strain>
    </source>
</reference>
<accession>C1CJQ4</accession>
<comment type="function">
    <text evidence="1">Negative regulator of FtsZ ring formation; modulates the frequency and position of FtsZ ring formation. Inhibits FtsZ ring formation at polar sites. Interacts either with FtsZ or with one of its binding partners to promote depolymerization.</text>
</comment>
<comment type="subcellular location">
    <subcellularLocation>
        <location evidence="1">Cell membrane</location>
        <topology evidence="1">Single-pass membrane protein</topology>
    </subcellularLocation>
    <text evidence="1">Colocalized with FtsZ to the nascent septal site.</text>
</comment>
<comment type="similarity">
    <text evidence="1">Belongs to the EzrA family.</text>
</comment>
<sequence>MSNGQLIYLMVAIAVILVLAYVVAIFLRKRNEGRLEALEERKEELYNLPVNDEVEAVKNMHLIGQSQVAFREWNQKWVDLSLNSFADIENNLFEAEGYNHSFRFLKASHQIDQIESQITLIEEDIAAIRNALADLEKQESKNSGRVLHALDLFEELQHRVAENSEQYGQALDEIEKQLENIQSEFSQFVTLNSSGDPVEAAVILDNTENHILALSHIVDRVPALVTTLSTELPDQLQDLEAGYRKLIDANYHFVETDIEARFHLLYEAFKKNQENIRQLELDNAEYENGQAQEEINALYDIFTREIAAQKVVENLLATLPTYLQHMKENNTLLGEDIARLNKTYLLPETAASHVRRIQTELESFEAAIVEVTSNQEEPTQAYSVLEENLEDLQTQLKDIEDEQISVSERLTQIEKDDINARQKANVYVNRLHTIKRYMEKRNLPGIPQTFLKLFFTASNNTEDLMVELEQKMINIESVTRVLEIATNDMEALETETYNIVQYATLTEQLLQYSNRYRSFDERIQEAFNEALDIFEKEFDYHASFDKISQALEVAEPGVTNRFVTSYEKTRETIRF</sequence>
<dbReference type="EMBL" id="CP000920">
    <property type="protein sequence ID" value="ACO21574.1"/>
    <property type="molecule type" value="Genomic_DNA"/>
</dbReference>
<dbReference type="RefSeq" id="WP_000064821.1">
    <property type="nucleotide sequence ID" value="NC_012467.1"/>
</dbReference>
<dbReference type="SMR" id="C1CJQ4"/>
<dbReference type="KEGG" id="spp:SPP_0816"/>
<dbReference type="HOGENOM" id="CLU_034079_2_0_9"/>
<dbReference type="GO" id="GO:0005886">
    <property type="term" value="C:plasma membrane"/>
    <property type="evidence" value="ECO:0007669"/>
    <property type="project" value="UniProtKB-SubCell"/>
</dbReference>
<dbReference type="GO" id="GO:0005940">
    <property type="term" value="C:septin ring"/>
    <property type="evidence" value="ECO:0007669"/>
    <property type="project" value="InterPro"/>
</dbReference>
<dbReference type="GO" id="GO:0000917">
    <property type="term" value="P:division septum assembly"/>
    <property type="evidence" value="ECO:0007669"/>
    <property type="project" value="UniProtKB-KW"/>
</dbReference>
<dbReference type="GO" id="GO:0000921">
    <property type="term" value="P:septin ring assembly"/>
    <property type="evidence" value="ECO:0007669"/>
    <property type="project" value="InterPro"/>
</dbReference>
<dbReference type="HAMAP" id="MF_00728">
    <property type="entry name" value="EzrA"/>
    <property type="match status" value="1"/>
</dbReference>
<dbReference type="InterPro" id="IPR010379">
    <property type="entry name" value="EzrA"/>
</dbReference>
<dbReference type="NCBIfam" id="NF003410">
    <property type="entry name" value="PRK04778.1-4"/>
    <property type="match status" value="1"/>
</dbReference>
<dbReference type="Pfam" id="PF06160">
    <property type="entry name" value="EzrA"/>
    <property type="match status" value="1"/>
</dbReference>
<gene>
    <name evidence="1" type="primary">ezrA</name>
    <name type="ordered locus">SPP_0816</name>
</gene>
<evidence type="ECO:0000255" key="1">
    <source>
        <dbReference type="HAMAP-Rule" id="MF_00728"/>
    </source>
</evidence>